<reference key="1">
    <citation type="journal article" date="1994" name="Proc. Natl. Acad. Sci. U.S.A.">
        <title>Molecular cloning of fibroblast activation protein alpha, a member of the serine protease family selectively expressed in stromal fibroblasts of epithelial cancers.</title>
        <authorList>
            <person name="Scanlan M.J."/>
            <person name="Raj B.K.M."/>
            <person name="Calvo B."/>
            <person name="Garin-Chesa P."/>
            <person name="Sanz-Moncasi M.P."/>
            <person name="Healey J.H."/>
            <person name="Old L.J."/>
            <person name="Rettig W.J."/>
        </authorList>
    </citation>
    <scope>NUCLEOTIDE SEQUENCE [MRNA] (ISOFORM 1)</scope>
    <scope>GLYCOSYLATION</scope>
    <scope>SUBCELLULAR LOCATION</scope>
    <scope>TISSUE SPECIFICITY</scope>
    <source>
        <tissue>Fibroblast</tissue>
    </source>
</reference>
<reference key="2">
    <citation type="journal article" date="1997" name="Biochim. Biophys. Acta">
        <title>Molecular cloning of seprase: a serine integral membrane protease from human melanoma.</title>
        <authorList>
            <person name="Goldstein L.A."/>
            <person name="Ghersi G."/>
            <person name="Pineiro-Sanchez M.L."/>
            <person name="Salamone M."/>
            <person name="Yeh Y."/>
            <person name="Flessate D."/>
            <person name="Chen W.-T."/>
        </authorList>
    </citation>
    <scope>NUCLEOTIDE SEQUENCE [MRNA] (ISOFORM 1)</scope>
    <source>
        <tissue>Melanoma</tissue>
    </source>
</reference>
<reference key="3">
    <citation type="journal article" date="1997" name="J. Biol. Chem.">
        <title>Identification of the 170-kDa melanoma membrane-bound gelatinase (seprase) as a serine integral membrane protease.</title>
        <authorList>
            <person name="Pineiro-Sanchez M.L."/>
            <person name="Goldstein L.A."/>
            <person name="Dodt J."/>
            <person name="Howard L."/>
            <person name="Yeh Y."/>
            <person name="Chen W.-T."/>
        </authorList>
    </citation>
    <scope>NUCLEOTIDE SEQUENCE [MRNA] (ISOFORM 1)</scope>
    <scope>PROTEIN SEQUENCE OF 220-229; 461-472 AND 511-518</scope>
    <scope>FUNCTION</scope>
    <scope>CATALYTIC ACTIVITY</scope>
    <scope>BIOPHYSICOCHEMICAL PROPERTIES</scope>
    <scope>ACTIVITY REGULATION</scope>
    <scope>SUBUNIT</scope>
    <scope>GLYCOSYLATION</scope>
    <scope>SUBCELLULAR LOCATION</scope>
    <source>
        <tissue>Melanoma</tissue>
    </source>
</reference>
<reference key="4">
    <citation type="journal article" date="2000" name="J. Biol. Chem.">
        <title>Identification of an alternatively spliced seprase mRNA that encodes a novel intracellular isoform.</title>
        <authorList>
            <person name="Goldstein L.A."/>
            <person name="Chen W.-T."/>
        </authorList>
    </citation>
    <scope>NUCLEOTIDE SEQUENCE [MRNA] (ISOFORMS 1 AND 2)</scope>
    <scope>SUBCELLULAR LOCATION</scope>
    <scope>TISSUE SPECIFICITY</scope>
    <source>
        <tissue>Melanoma</tissue>
    </source>
</reference>
<reference key="5">
    <citation type="journal article" date="2005" name="Nature">
        <title>Generation and annotation of the DNA sequences of human chromosomes 2 and 4.</title>
        <authorList>
            <person name="Hillier L.W."/>
            <person name="Graves T.A."/>
            <person name="Fulton R.S."/>
            <person name="Fulton L.A."/>
            <person name="Pepin K.H."/>
            <person name="Minx P."/>
            <person name="Wagner-McPherson C."/>
            <person name="Layman D."/>
            <person name="Wylie K."/>
            <person name="Sekhon M."/>
            <person name="Becker M.C."/>
            <person name="Fewell G.A."/>
            <person name="Delehaunty K.D."/>
            <person name="Miner T.L."/>
            <person name="Nash W.E."/>
            <person name="Kremitzki C."/>
            <person name="Oddy L."/>
            <person name="Du H."/>
            <person name="Sun H."/>
            <person name="Bradshaw-Cordum H."/>
            <person name="Ali J."/>
            <person name="Carter J."/>
            <person name="Cordes M."/>
            <person name="Harris A."/>
            <person name="Isak A."/>
            <person name="van Brunt A."/>
            <person name="Nguyen C."/>
            <person name="Du F."/>
            <person name="Courtney L."/>
            <person name="Kalicki J."/>
            <person name="Ozersky P."/>
            <person name="Abbott S."/>
            <person name="Armstrong J."/>
            <person name="Belter E.A."/>
            <person name="Caruso L."/>
            <person name="Cedroni M."/>
            <person name="Cotton M."/>
            <person name="Davidson T."/>
            <person name="Desai A."/>
            <person name="Elliott G."/>
            <person name="Erb T."/>
            <person name="Fronick C."/>
            <person name="Gaige T."/>
            <person name="Haakenson W."/>
            <person name="Haglund K."/>
            <person name="Holmes A."/>
            <person name="Harkins R."/>
            <person name="Kim K."/>
            <person name="Kruchowski S.S."/>
            <person name="Strong C.M."/>
            <person name="Grewal N."/>
            <person name="Goyea E."/>
            <person name="Hou S."/>
            <person name="Levy A."/>
            <person name="Martinka S."/>
            <person name="Mead K."/>
            <person name="McLellan M.D."/>
            <person name="Meyer R."/>
            <person name="Randall-Maher J."/>
            <person name="Tomlinson C."/>
            <person name="Dauphin-Kohlberg S."/>
            <person name="Kozlowicz-Reilly A."/>
            <person name="Shah N."/>
            <person name="Swearengen-Shahid S."/>
            <person name="Snider J."/>
            <person name="Strong J.T."/>
            <person name="Thompson J."/>
            <person name="Yoakum M."/>
            <person name="Leonard S."/>
            <person name="Pearman C."/>
            <person name="Trani L."/>
            <person name="Radionenko M."/>
            <person name="Waligorski J.E."/>
            <person name="Wang C."/>
            <person name="Rock S.M."/>
            <person name="Tin-Wollam A.-M."/>
            <person name="Maupin R."/>
            <person name="Latreille P."/>
            <person name="Wendl M.C."/>
            <person name="Yang S.-P."/>
            <person name="Pohl C."/>
            <person name="Wallis J.W."/>
            <person name="Spieth J."/>
            <person name="Bieri T.A."/>
            <person name="Berkowicz N."/>
            <person name="Nelson J.O."/>
            <person name="Osborne J."/>
            <person name="Ding L."/>
            <person name="Meyer R."/>
            <person name="Sabo A."/>
            <person name="Shotland Y."/>
            <person name="Sinha P."/>
            <person name="Wohldmann P.E."/>
            <person name="Cook L.L."/>
            <person name="Hickenbotham M.T."/>
            <person name="Eldred J."/>
            <person name="Williams D."/>
            <person name="Jones T.A."/>
            <person name="She X."/>
            <person name="Ciccarelli F.D."/>
            <person name="Izaurralde E."/>
            <person name="Taylor J."/>
            <person name="Schmutz J."/>
            <person name="Myers R.M."/>
            <person name="Cox D.R."/>
            <person name="Huang X."/>
            <person name="McPherson J.D."/>
            <person name="Mardis E.R."/>
            <person name="Clifton S.W."/>
            <person name="Warren W.C."/>
            <person name="Chinwalla A.T."/>
            <person name="Eddy S.R."/>
            <person name="Marra M.A."/>
            <person name="Ovcharenko I."/>
            <person name="Furey T.S."/>
            <person name="Miller W."/>
            <person name="Eichler E.E."/>
            <person name="Bork P."/>
            <person name="Suyama M."/>
            <person name="Torrents D."/>
            <person name="Waterston R.H."/>
            <person name="Wilson R.K."/>
        </authorList>
    </citation>
    <scope>NUCLEOTIDE SEQUENCE [LARGE SCALE GENOMIC DNA]</scope>
</reference>
<reference key="6">
    <citation type="submission" date="2005-09" db="EMBL/GenBank/DDBJ databases">
        <authorList>
            <person name="Mural R.J."/>
            <person name="Istrail S."/>
            <person name="Sutton G.G."/>
            <person name="Florea L."/>
            <person name="Halpern A.L."/>
            <person name="Mobarry C.M."/>
            <person name="Lippert R."/>
            <person name="Walenz B."/>
            <person name="Shatkay H."/>
            <person name="Dew I."/>
            <person name="Miller J.R."/>
            <person name="Flanigan M.J."/>
            <person name="Edwards N.J."/>
            <person name="Bolanos R."/>
            <person name="Fasulo D."/>
            <person name="Halldorsson B.V."/>
            <person name="Hannenhalli S."/>
            <person name="Turner R."/>
            <person name="Yooseph S."/>
            <person name="Lu F."/>
            <person name="Nusskern D.R."/>
            <person name="Shue B.C."/>
            <person name="Zheng X.H."/>
            <person name="Zhong F."/>
            <person name="Delcher A.L."/>
            <person name="Huson D.H."/>
            <person name="Kravitz S.A."/>
            <person name="Mouchard L."/>
            <person name="Reinert K."/>
            <person name="Remington K.A."/>
            <person name="Clark A.G."/>
            <person name="Waterman M.S."/>
            <person name="Eichler E.E."/>
            <person name="Adams M.D."/>
            <person name="Hunkapiller M.W."/>
            <person name="Myers E.W."/>
            <person name="Venter J.C."/>
        </authorList>
    </citation>
    <scope>NUCLEOTIDE SEQUENCE [LARGE SCALE GENOMIC DNA]</scope>
</reference>
<reference key="7">
    <citation type="journal article" date="2004" name="Genome Res.">
        <title>The status, quality, and expansion of the NIH full-length cDNA project: the Mammalian Gene Collection (MGC).</title>
        <authorList>
            <consortium name="The MGC Project Team"/>
        </authorList>
    </citation>
    <scope>NUCLEOTIDE SEQUENCE [LARGE SCALE MRNA] (ISOFORM 1)</scope>
    <source>
        <tissue>Placenta</tissue>
    </source>
</reference>
<reference key="8">
    <citation type="journal article" date="2004" name="Blood">
        <title>A novel plasma proteinase potentiates alpha2-antiplasmin inhibition of fibrin digestion.</title>
        <authorList>
            <person name="Lee K.N."/>
            <person name="Jackson K.W."/>
            <person name="Christiansen V.J."/>
            <person name="Chung K.H."/>
            <person name="McKee P.A."/>
        </authorList>
    </citation>
    <scope>PROTEIN SEQUENCE OF 24-38; 210-219; 247-254; 487-499; 500-509 AND 522-530</scope>
    <scope>FUNCTION (SOLUBLE FORM)</scope>
    <scope>CATALYTIC ACTIVITY</scope>
    <scope>SUBCELLULAR LOCATION</scope>
</reference>
<reference key="9">
    <citation type="journal article" date="1994" name="Int. J. Cancer">
        <title>Fibroblast activation protein: purification, epitope mapping and induction by growth factors.</title>
        <authorList>
            <person name="Rettig W.J."/>
            <person name="Su S.L."/>
            <person name="Fortunato S.R."/>
            <person name="Scanlan M.J."/>
            <person name="Raj B.K.M."/>
            <person name="Garin-Chesa P."/>
            <person name="Healey J.H."/>
            <person name="Old L.J."/>
        </authorList>
    </citation>
    <scope>PROTEIN SEQUENCE OF 192-208; 220-240 AND 510-521</scope>
    <scope>INDUCTION</scope>
</reference>
<reference key="10">
    <citation type="journal article" date="1990" name="Proc. Natl. Acad. Sci. U.S.A.">
        <title>A 170-kDa membrane-bound protease is associated with the expression of invasiveness by human malignant melanoma cells.</title>
        <authorList>
            <person name="Aoyama A."/>
            <person name="Chen W.T."/>
        </authorList>
    </citation>
    <scope>FUNCTION</scope>
    <scope>SUBCELLULAR LOCATION</scope>
    <scope>CATALYTIC ACTIVITY</scope>
    <scope>ACTIVITY REGULATION</scope>
    <scope>BIOPHYSICOCHEMICAL PROPERTIES</scope>
</reference>
<reference key="11">
    <citation type="journal article" date="1994" name="Cancer Res.">
        <title>A potential marker protease of invasiveness, seprase, is localized on invadopodia of human malignant melanoma cells.</title>
        <authorList>
            <person name="Monsky W.L."/>
            <person name="Lin C.Y."/>
            <person name="Aoyama A."/>
            <person name="Kelly T."/>
            <person name="Akiyama S.K."/>
            <person name="Mueller S.C."/>
            <person name="Chen W.T."/>
        </authorList>
    </citation>
    <scope>FUNCTION</scope>
    <scope>CATALYTIC ACTIVITY</scope>
    <scope>SUBCELLULAR LOCATION</scope>
</reference>
<reference key="12">
    <citation type="journal article" date="1999" name="Hepatology">
        <title>Fibroblast activation protein: a cell surface dipeptidyl peptidase and gelatinase expressed by stellate cells at the tissue remodelling interface in human cirrhosis.</title>
        <authorList>
            <person name="Levy M.T."/>
            <person name="McCaughan G.W."/>
            <person name="Abbott C.A."/>
            <person name="Park J.E."/>
            <person name="Cunningham A.M."/>
            <person name="Mueller E."/>
            <person name="Rettig W.J."/>
            <person name="Gorrell M.D."/>
        </authorList>
    </citation>
    <scope>FUNCTION</scope>
    <scope>CATALYTIC ACTIVITY</scope>
    <scope>TISSUE SPECIFICITY</scope>
</reference>
<reference key="13">
    <citation type="journal article" date="1999" name="J. Biol. Chem.">
        <title>Fibroblast activation protein, a dual specificity serine protease expressed in reactive human tumor stromal fibroblasts.</title>
        <authorList>
            <person name="Park J.E."/>
            <person name="Lenter M.C."/>
            <person name="Zimmermann R.N."/>
            <person name="Garin-Chesa P."/>
            <person name="Old L.J."/>
            <person name="Rettig W.J."/>
        </authorList>
    </citation>
    <scope>FUNCTION</scope>
    <scope>CATALYTIC ACTIVITY</scope>
    <scope>BIOPHYSICOCHEMICAL PROPERTIES</scope>
    <scope>ACTIVITY REGULATION</scope>
    <scope>SUBCELLULAR LOCATION</scope>
    <scope>TISSUE SPECIFICITY</scope>
    <scope>MUTAGENESIS OF SER-624</scope>
</reference>
<reference key="14">
    <citation type="journal article" date="1999" name="J. Biol. Chem.">
        <title>A novel protease-docking function of integrin at invadopodia.</title>
        <authorList>
            <person name="Mueller S.C."/>
            <person name="Ghersi G."/>
            <person name="Akiyama S.K."/>
            <person name="Sang Q.X."/>
            <person name="Howard L."/>
            <person name="Pineiro-Sanchez M."/>
            <person name="Nakahara H."/>
            <person name="Yeh Y."/>
            <person name="Chen W.T."/>
        </authorList>
    </citation>
    <scope>FUNCTION</scope>
    <scope>CATALYTIC ACTIVITY</scope>
    <scope>SUBUNIT</scope>
    <scope>INTERACTION WITH ITGA3 AND ITGB1</scope>
    <scope>ASSOCIATION WITH INTEGRIN ALPHA-3/BETA-1</scope>
    <scope>SUBCELLULAR LOCATION</scope>
</reference>
<reference key="15">
    <citation type="journal article" date="2002" name="Carcinogenesis">
        <title>Molecular proximity of seprase and the urokinase-type plasminogen activator receptor on malignant melanoma cell membranes: dependence on beta1 integrins and the cytoskeleton.</title>
        <authorList>
            <person name="Artym V.V."/>
            <person name="Kindzelskii A.L."/>
            <person name="Chen W.T."/>
            <person name="Petty H.R."/>
        </authorList>
    </citation>
    <scope>FUNCTION</scope>
    <scope>CATALYTIC ACTIVITY</scope>
    <scope>INTERACTION WITH PLAUR</scope>
    <scope>SUBCELLULAR LOCATION</scope>
</reference>
<reference key="16">
    <citation type="journal article" date="2005" name="Hepatology">
        <title>Fibroblast activation protein increases apoptosis, cell adhesion, and migration by the LX-2 human stellate cell line.</title>
        <authorList>
            <person name="Wang X.M."/>
            <person name="Yu D.M."/>
            <person name="McCaughan G.W."/>
            <person name="Gorrell M.D."/>
        </authorList>
    </citation>
    <scope>FUNCTION</scope>
    <scope>CATALYTIC ACTIVITY</scope>
    <scope>SUBCELLULAR LOCATION</scope>
    <scope>TISSUE SPECIFICITY</scope>
    <scope>MUTAGENESIS OF GLU-203; GLU-204 AND SER-624</scope>
</reference>
<reference key="17">
    <citation type="journal article" date="2005" name="J. Proteome Res.">
        <title>Human plasma N-glycoproteome analysis by immunoaffinity subtraction, hydrazide chemistry, and mass spectrometry.</title>
        <authorList>
            <person name="Liu T."/>
            <person name="Qian W.-J."/>
            <person name="Gritsenko M.A."/>
            <person name="Camp D.G. II"/>
            <person name="Monroe M.E."/>
            <person name="Moore R.J."/>
            <person name="Smith R.D."/>
        </authorList>
    </citation>
    <scope>GLYCOSYLATION [LARGE SCALE ANALYSIS] AT ASN-99 AND ASN-227</scope>
    <source>
        <tissue>Plasma</tissue>
    </source>
</reference>
<reference key="18">
    <citation type="journal article" date="2006" name="Arthritis Res. Ther.">
        <title>Fibroblast activation protein is expressed by rheumatoid myofibroblast-like synoviocytes.</title>
        <authorList>
            <person name="Bauer S."/>
            <person name="Jendro M.C."/>
            <person name="Wadle A."/>
            <person name="Kleber S."/>
            <person name="Stenner F."/>
            <person name="Dinser R."/>
            <person name="Reich A."/>
            <person name="Faccin E."/>
            <person name="Goedde S."/>
            <person name="Dinges H."/>
            <person name="Mueller-Ladner U."/>
            <person name="Renner C."/>
        </authorList>
    </citation>
    <scope>FUNCTION</scope>
    <scope>SUBCELLULAR LOCATION</scope>
    <scope>TISSUE SPECIFICITY</scope>
</reference>
<reference key="19">
    <citation type="journal article" date="2006" name="Blood">
        <title>Antiplasmin-cleaving enzyme is a soluble form of fibroblast activation protein.</title>
        <authorList>
            <person name="Lee K.N."/>
            <person name="Jackson K.W."/>
            <person name="Christiansen V.J."/>
            <person name="Lee C.S."/>
            <person name="Chun J.G."/>
            <person name="McKee P.A."/>
        </authorList>
    </citation>
    <scope>FUNCTION (PLASMA MEMBRANE AND SOLUBLE FORMS)</scope>
    <scope>CATALYTIC ACTIVITY</scope>
    <scope>BIOPHYSICOCHEMICAL PROPERTIES</scope>
    <scope>SUBUNIT</scope>
    <scope>SUBCELLULAR LOCATION</scope>
</reference>
<reference key="20">
    <citation type="journal article" date="2006" name="Cancer Res.">
        <title>The protease complex consisting of dipeptidyl peptidase IV and seprase plays a role in the migration and invasion of human endothelial cells in collagenous matrices.</title>
        <authorList>
            <person name="Ghersi G."/>
            <person name="Zhao Q."/>
            <person name="Salamone M."/>
            <person name="Yeh Y."/>
            <person name="Zucker S."/>
            <person name="Chen W.T."/>
        </authorList>
    </citation>
    <scope>FUNCTION</scope>
    <scope>CATALYTIC ACTIVITY</scope>
    <scope>HETERODIMERIZATION WITH DPP4</scope>
    <scope>SUBCELLULAR LOCATION</scope>
</reference>
<reference key="21">
    <citation type="journal article" date="2006" name="FEBS Lett.">
        <title>Peptide substrate profiling defines fibroblast activation protein as an endopeptidase of strict Gly(2)-Pro(1)-cleaving specificity.</title>
        <authorList>
            <person name="Edosada C.Y."/>
            <person name="Quan C."/>
            <person name="Tran T."/>
            <person name="Pham V."/>
            <person name="Wiesmann C."/>
            <person name="Fairbrother W."/>
            <person name="Wolf B.B."/>
        </authorList>
    </citation>
    <scope>FUNCTION</scope>
    <scope>CATALYTIC ACTIVITY</scope>
    <scope>BIOPHYSICOCHEMICAL PROPERTIES</scope>
    <scope>ACTIVITY REGULATION</scope>
</reference>
<reference key="22">
    <citation type="journal article" date="2006" name="J. Biol. Chem.">
        <title>Selective inhibition of fibroblast activation protein protease based on dipeptide substrate specificity.</title>
        <authorList>
            <person name="Edosada C.Y."/>
            <person name="Quan C."/>
            <person name="Wiesmann C."/>
            <person name="Tran T."/>
            <person name="Sutherlin D."/>
            <person name="Reynolds M."/>
            <person name="Elliott J.M."/>
            <person name="Raab H."/>
            <person name="Fairbrother W."/>
            <person name="Wolf B.B."/>
        </authorList>
    </citation>
    <scope>FUNCTION</scope>
    <scope>CATALYTIC ACTIVITY</scope>
    <scope>BIOPHYSICOCHEMICAL PROPERTIES</scope>
    <scope>ACTIVITY REGULATION</scope>
    <scope>SUBUNIT</scope>
</reference>
<reference key="23">
    <citation type="journal article" date="2007" name="Biochemistry">
        <title>Ala657 and conserved active site residues promote fibroblast activation protein endopeptidase activity via distinct mechanisms of transition state stabilization.</title>
        <authorList>
            <person name="Meadows S.A."/>
            <person name="Edosada C.Y."/>
            <person name="Mayeda M."/>
            <person name="Tran T."/>
            <person name="Quan C."/>
            <person name="Raab H."/>
            <person name="Wiesmann C."/>
            <person name="Wolf B.B."/>
        </authorList>
    </citation>
    <scope>FUNCTION</scope>
    <scope>MUTAGENESIS OF ARG-123; GLU-203; TYR-656; ALA-657 AND ASN-704</scope>
    <scope>CATALYTIC ACTIVITY</scope>
    <scope>BIOPHYSICOCHEMICAL PROPERTIES</scope>
    <scope>ACTIVITY REGULATION</scope>
</reference>
<reference key="24">
    <citation type="journal article" date="2008" name="Biochemistry">
        <title>Fibroblast activation protein peptide substrates identified from human collagen I derived gelatin cleavage sites.</title>
        <authorList>
            <person name="Aggarwal S."/>
            <person name="Brennen W.N."/>
            <person name="Kole T.P."/>
            <person name="Schneider E."/>
            <person name="Topaloglu O."/>
            <person name="Yates M."/>
            <person name="Cotter R.J."/>
            <person name="Denmeade S.R."/>
        </authorList>
    </citation>
    <scope>FUNCTION</scope>
    <scope>CATALYTIC ACTIVITY</scope>
</reference>
<reference key="25">
    <citation type="journal article" date="2008" name="Biochim. Biophys. Acta">
        <title>Seprase: an overview of an important matrix serine protease.</title>
        <authorList>
            <person name="O'Brien P."/>
            <person name="O'Connor B.F."/>
        </authorList>
    </citation>
    <scope>REVIEW</scope>
    <scope>FUNCTION</scope>
</reference>
<reference key="26">
    <citation type="journal article" date="2011" name="Biol. Chem.">
        <title>Expression and role of the cell surface protease seprase/fibroblast activation protein-alpha (FAP-alpha) in astroglial tumors.</title>
        <authorList>
            <person name="Mentlein R."/>
            <person name="Hattermann K."/>
            <person name="Hemion C."/>
            <person name="Jungbluth A.A."/>
            <person name="Held-Feindt J."/>
        </authorList>
    </citation>
    <scope>FUNCTION</scope>
    <scope>TISSUE SPECIFICITY</scope>
    <scope>INDUCTION</scope>
</reference>
<reference key="27">
    <citation type="journal article" date="2011" name="FEBS J.">
        <title>Neuropeptide Y, B-type natriuretic peptide, substance P and peptide YY are novel substrates of fibroblast activation protein-alpha.</title>
        <authorList>
            <person name="Keane F.M."/>
            <person name="Nadvi N.A."/>
            <person name="Yao T.W."/>
            <person name="Gorrell M.D."/>
        </authorList>
    </citation>
    <scope>FUNCTION</scope>
    <scope>CATALYTIC ACTIVITY</scope>
</reference>
<reference key="28">
    <citation type="journal article" date="2011" name="J. Biochem.">
        <title>Cleavage-site specificity of prolyl endopeptidase FAP investigated with a full-length protein substrate.</title>
        <authorList>
            <person name="Huang C.H."/>
            <person name="Suen C.S."/>
            <person name="Lin C.T."/>
            <person name="Chien C.H."/>
            <person name="Lee H.Y."/>
            <person name="Chung K.M."/>
            <person name="Tsai T.Y."/>
            <person name="Jiaang W.T."/>
            <person name="Hwang M.J."/>
            <person name="Chen X."/>
        </authorList>
    </citation>
    <scope>FUNCTION</scope>
    <scope>CATALYTIC ACTIVITY</scope>
</reference>
<reference key="29">
    <citation type="journal article" date="2013" name="FEBS Open Bio">
        <title>Quantitation of fibroblast activation protein (FAP)-specific protease activity in mouse, baboon and human fluids and organs.</title>
        <authorList>
            <person name="Keane F.M."/>
            <person name="Yao T.W."/>
            <person name="Seelk S."/>
            <person name="Gall M.G."/>
            <person name="Chowdhury S."/>
            <person name="Poplawski S.E."/>
            <person name="Lai J.H."/>
            <person name="Li Y."/>
            <person name="Wu W."/>
            <person name="Farrell P."/>
            <person name="Vieira de Ribeiro A.J."/>
            <person name="Osborne B."/>
            <person name="Yu D.M."/>
            <person name="Seth D."/>
            <person name="Rahman K."/>
            <person name="Haber P."/>
            <person name="Topaloglu A.K."/>
            <person name="Wang C."/>
            <person name="Thomson S."/>
            <person name="Hennessy A."/>
            <person name="Prins J."/>
            <person name="Twigg S.M."/>
            <person name="McLennan S.V."/>
            <person name="McCaughan G.W."/>
            <person name="Bachovchin W.W."/>
            <person name="Gorrell M.D."/>
        </authorList>
    </citation>
    <scope>FUNCTION</scope>
    <scope>CATALYTIC ACTIVITY</scope>
    <scope>SUBCELLULAR LOCATION</scope>
    <scope>TISSUE SPECIFICITY</scope>
    <scope>CHARACTERIZATION OF VARIANT LEU-363</scope>
</reference>
<reference key="30">
    <citation type="journal article" date="2014" name="Biochim. Biophys. Acta">
        <title>A rare variant in human fibroblast activation protein associated with ER stress, loss of enzymatic function and loss of cell surface localisation.</title>
        <authorList>
            <person name="Osborne B."/>
            <person name="Yao T.W."/>
            <person name="Wang X.M."/>
            <person name="Chen Y."/>
            <person name="Kotan L.D."/>
            <person name="Nadvi N.A."/>
            <person name="Herdem M."/>
            <person name="McCaughan G.W."/>
            <person name="Allen J.D."/>
            <person name="Yu D.M."/>
            <person name="Topaloglu A.K."/>
            <person name="Gorrell M.D."/>
        </authorList>
    </citation>
    <scope>FUNCTION</scope>
    <scope>CATALYTIC ACTIVITY</scope>
    <scope>SUBCELLULAR LOCATION</scope>
    <scope>CHARACTERIZATION OF VARIANT LEU-363</scope>
</reference>
<reference key="31">
    <citation type="journal article" date="2005" name="J. Biol. Chem.">
        <title>Structural and kinetic analysis of the substrate specificity of human fibroblast activation protein alpha.</title>
        <authorList>
            <person name="Aertgeerts K."/>
            <person name="Levin I."/>
            <person name="Shi L."/>
            <person name="Snell G.P."/>
            <person name="Jennings A."/>
            <person name="Prasad G.S."/>
            <person name="Zhang Y."/>
            <person name="Kraus M.L."/>
            <person name="Salakian S."/>
            <person name="Sridhar V."/>
            <person name="Wijnands R."/>
            <person name="Tennant M.G."/>
        </authorList>
    </citation>
    <scope>X-RAY CRYSTALLOGRAPHY (2.6 ANGSTROMS) OF 39-757</scope>
    <scope>SUBSTRATE BINDING</scope>
    <scope>SUBUNIT</scope>
    <scope>DISULFIDE BONDS</scope>
    <scope>ACTIVE SITE</scope>
    <scope>GLYCOSYLATION AT ASN-49; ASN-92; ASN-227 AND ASN-314</scope>
</reference>
<accession>Q12884</accession>
<accession>O00199</accession>
<accession>Q53TP5</accession>
<accession>Q86Z29</accession>
<accession>Q99998</accession>
<accession>Q9UID4</accession>
<name>SEPR_HUMAN</name>
<gene>
    <name evidence="41" type="primary">FAP</name>
</gene>
<organism>
    <name type="scientific">Homo sapiens</name>
    <name type="common">Human</name>
    <dbReference type="NCBI Taxonomy" id="9606"/>
    <lineage>
        <taxon>Eukaryota</taxon>
        <taxon>Metazoa</taxon>
        <taxon>Chordata</taxon>
        <taxon>Craniata</taxon>
        <taxon>Vertebrata</taxon>
        <taxon>Euteleostomi</taxon>
        <taxon>Mammalia</taxon>
        <taxon>Eutheria</taxon>
        <taxon>Euarchontoglires</taxon>
        <taxon>Primates</taxon>
        <taxon>Haplorrhini</taxon>
        <taxon>Catarrhini</taxon>
        <taxon>Hominidae</taxon>
        <taxon>Homo</taxon>
    </lineage>
</organism>
<evidence type="ECO:0000250" key="1">
    <source>
        <dbReference type="UniProtKB" id="P97321"/>
    </source>
</evidence>
<evidence type="ECO:0000255" key="2"/>
<evidence type="ECO:0000255" key="3">
    <source>
        <dbReference type="PROSITE-ProRule" id="PRU00498"/>
    </source>
</evidence>
<evidence type="ECO:0000255" key="4">
    <source>
        <dbReference type="PROSITE-ProRule" id="PRU10084"/>
    </source>
</evidence>
<evidence type="ECO:0000269" key="5">
    <source>
    </source>
</evidence>
<evidence type="ECO:0000269" key="6">
    <source>
    </source>
</evidence>
<evidence type="ECO:0000269" key="7">
    <source>
    </source>
</evidence>
<evidence type="ECO:0000269" key="8">
    <source>
    </source>
</evidence>
<evidence type="ECO:0000269" key="9">
    <source>
    </source>
</evidence>
<evidence type="ECO:0000269" key="10">
    <source>
    </source>
</evidence>
<evidence type="ECO:0000269" key="11">
    <source>
    </source>
</evidence>
<evidence type="ECO:0000269" key="12">
    <source>
    </source>
</evidence>
<evidence type="ECO:0000269" key="13">
    <source>
    </source>
</evidence>
<evidence type="ECO:0000269" key="14">
    <source>
    </source>
</evidence>
<evidence type="ECO:0000269" key="15">
    <source>
    </source>
</evidence>
<evidence type="ECO:0000269" key="16">
    <source>
    </source>
</evidence>
<evidence type="ECO:0000269" key="17">
    <source>
    </source>
</evidence>
<evidence type="ECO:0000269" key="18">
    <source>
    </source>
</evidence>
<evidence type="ECO:0000269" key="19">
    <source>
    </source>
</evidence>
<evidence type="ECO:0000269" key="20">
    <source>
    </source>
</evidence>
<evidence type="ECO:0000269" key="21">
    <source>
    </source>
</evidence>
<evidence type="ECO:0000269" key="22">
    <source>
    </source>
</evidence>
<evidence type="ECO:0000269" key="23">
    <source>
    </source>
</evidence>
<evidence type="ECO:0000269" key="24">
    <source>
    </source>
</evidence>
<evidence type="ECO:0000269" key="25">
    <source>
    </source>
</evidence>
<evidence type="ECO:0000269" key="26">
    <source>
    </source>
</evidence>
<evidence type="ECO:0000269" key="27">
    <source>
    </source>
</evidence>
<evidence type="ECO:0000269" key="28">
    <source>
    </source>
</evidence>
<evidence type="ECO:0000269" key="29">
    <source>
    </source>
</evidence>
<evidence type="ECO:0000269" key="30">
    <source>
    </source>
</evidence>
<evidence type="ECO:0000303" key="31">
    <source>
    </source>
</evidence>
<evidence type="ECO:0000303" key="32">
    <source>
    </source>
</evidence>
<evidence type="ECO:0000303" key="33">
    <source>
    </source>
</evidence>
<evidence type="ECO:0000303" key="34">
    <source>
    </source>
</evidence>
<evidence type="ECO:0000303" key="35">
    <source>
    </source>
</evidence>
<evidence type="ECO:0000303" key="36">
    <source>
    </source>
</evidence>
<evidence type="ECO:0000303" key="37">
    <source>
    </source>
</evidence>
<evidence type="ECO:0000303" key="38">
    <source>
    </source>
</evidence>
<evidence type="ECO:0000303" key="39">
    <source>
    </source>
</evidence>
<evidence type="ECO:0000305" key="40"/>
<evidence type="ECO:0000312" key="41">
    <source>
        <dbReference type="HGNC" id="HGNC:3590"/>
    </source>
</evidence>
<evidence type="ECO:0007829" key="42">
    <source>
        <dbReference type="PDB" id="1Z68"/>
    </source>
</evidence>
<evidence type="ECO:0007829" key="43">
    <source>
        <dbReference type="PDB" id="6Y0F"/>
    </source>
</evidence>
<feature type="chain" id="PRO_0000122424" description="Prolyl endopeptidase FAP" evidence="40">
    <location>
        <begin position="1"/>
        <end position="760"/>
    </location>
</feature>
<feature type="chain" id="PRO_0000430643" description="Antiplasmin-cleaving enzyme FAP, soluble form" evidence="33">
    <location>
        <begin position="24"/>
        <end position="760"/>
    </location>
</feature>
<feature type="topological domain" description="Cytoplasmic" evidence="2 33">
    <location>
        <begin position="1"/>
        <end position="4"/>
    </location>
</feature>
<feature type="transmembrane region" description="Helical; Signal-anchor for type II membrane protein" evidence="2">
    <location>
        <begin position="5"/>
        <end position="25"/>
    </location>
</feature>
<feature type="topological domain" description="Extracellular" evidence="2 33">
    <location>
        <begin position="26"/>
        <end position="760"/>
    </location>
</feature>
<feature type="active site" description="Charge relay system" evidence="4 11">
    <location>
        <position position="624"/>
    </location>
</feature>
<feature type="active site" description="Charge relay system" evidence="11">
    <location>
        <position position="702"/>
    </location>
</feature>
<feature type="active site" description="Charge relay system" evidence="11">
    <location>
        <position position="734"/>
    </location>
</feature>
<feature type="binding site" evidence="34">
    <location>
        <position position="203"/>
    </location>
    <ligand>
        <name>substrate</name>
    </ligand>
</feature>
<feature type="binding site" evidence="34">
    <location>
        <position position="204"/>
    </location>
    <ligand>
        <name>substrate</name>
    </ligand>
</feature>
<feature type="site" description="Cleavage" evidence="33">
    <location>
        <begin position="23"/>
        <end position="24"/>
    </location>
</feature>
<feature type="glycosylation site" description="N-linked (GlcNAc...) asparagine" evidence="3 11">
    <location>
        <position position="49"/>
    </location>
</feature>
<feature type="glycosylation site" description="N-linked (GlcNAc...) asparagine" evidence="3 11">
    <location>
        <position position="92"/>
    </location>
</feature>
<feature type="glycosylation site" description="N-linked (GlcNAc...) asparagine" evidence="3 14">
    <location>
        <position position="99"/>
    </location>
</feature>
<feature type="glycosylation site" description="N-linked (GlcNAc...) asparagine" evidence="3 11 14">
    <location>
        <position position="227"/>
    </location>
</feature>
<feature type="glycosylation site" description="N-linked (GlcNAc...) asparagine" evidence="3 11">
    <location>
        <position position="314"/>
    </location>
</feature>
<feature type="glycosylation site" description="N-linked (GlcNAc...) asparagine" evidence="3">
    <location>
        <position position="679"/>
    </location>
</feature>
<feature type="disulfide bond" evidence="11">
    <location>
        <begin position="321"/>
        <end position="332"/>
    </location>
</feature>
<feature type="disulfide bond" evidence="11">
    <location>
        <begin position="438"/>
        <end position="441"/>
    </location>
</feature>
<feature type="disulfide bond" evidence="11">
    <location>
        <begin position="448"/>
        <end position="466"/>
    </location>
</feature>
<feature type="disulfide bond" evidence="11">
    <location>
        <begin position="643"/>
        <end position="755"/>
    </location>
</feature>
<feature type="splice variant" id="VSP_005367" description="In isoform 2." evidence="32">
    <location>
        <begin position="1"/>
        <end position="521"/>
    </location>
</feature>
<feature type="sequence variant" id="VAR_071264" description="Decreased plasma membrane expression; loss of homodimerization and dipeptidyl peptidase activity; mislocalized with the calnexin in the endoplasmic reticulum; causes induction of the unfolded protein response (UPR); dbSNP:rs762738740." evidence="25 26">
    <original>S</original>
    <variation>L</variation>
    <location>
        <position position="363"/>
    </location>
</feature>
<feature type="mutagenesis site" description="Reduces dipeptidyl peptidase and endopeptidase activities." evidence="19">
    <original>R</original>
    <variation>A</variation>
    <variation>M</variation>
    <variation>E</variation>
    <location>
        <position position="123"/>
    </location>
</feature>
<feature type="mutagenesis site" description="Reduces dipeptidyl peptidase and endopeptidase activities. Does not inhibit cell adhesion, migration and invasion. Inhibits dipeptidyl peptidase and endopeptidase activities; when associated with A-204." evidence="12 19">
    <original>E</original>
    <variation>A</variation>
    <variation>D</variation>
    <variation>Q</variation>
    <location>
        <position position="203"/>
    </location>
</feature>
<feature type="mutagenesis site" description="Reduces dipeptidyl peptidase and endopeptidase activities. Does not inhibit cell adhesion, migration and invasion. Inhibits dipeptidyl peptidase and endopeptidase activities; when associated with A-203." evidence="12 19">
    <original>E</original>
    <variation>A</variation>
    <variation>D</variation>
    <variation>Q</variation>
    <location>
        <position position="204"/>
    </location>
</feature>
<feature type="mutagenesis site" description="Reduces dipeptidyl peptidase and gelatinolytic activities. Does not inhibit cell adhesion, migration and invasion." evidence="7 12">
    <original>S</original>
    <variation>A</variation>
    <location>
        <position position="624"/>
    </location>
</feature>
<feature type="mutagenesis site" description="Reduces dipeptidyl peptidase and endopeptidase activities." evidence="19">
    <original>Y</original>
    <variation>F</variation>
    <location>
        <position position="656"/>
    </location>
</feature>
<feature type="mutagenesis site" description="Inhibits endopeptidase activity. Increases dipeptidyl peptidase activity." evidence="19">
    <original>A</original>
    <variation>D</variation>
    <variation>N</variation>
    <location>
        <position position="657"/>
    </location>
</feature>
<feature type="mutagenesis site" description="Reduces dipeptidyl peptidase and endopeptidase activities." evidence="19">
    <original>A</original>
    <variation>F</variation>
    <variation>V</variation>
    <location>
        <position position="657"/>
    </location>
</feature>
<feature type="mutagenesis site" description="Inhibits endopeptidase activity. No change in dipeptidyl peptidase activity." evidence="19">
    <original>A</original>
    <variation>Q</variation>
    <location>
        <position position="657"/>
    </location>
</feature>
<feature type="mutagenesis site" description="Strongly reduces endopeptidase activity. No change in dipeptidyl peptidase activity." evidence="19">
    <original>A</original>
    <variation>S</variation>
    <variation>T</variation>
    <location>
        <position position="657"/>
    </location>
</feature>
<feature type="mutagenesis site" description="Reduces dipeptidyl peptidase and endopeptidase activities." evidence="19">
    <original>N</original>
    <variation>A</variation>
    <location>
        <position position="704"/>
    </location>
</feature>
<feature type="sequence conflict" description="In Ref. 1; AAB49652." evidence="40" ref="1">
    <original>A</original>
    <variation>P</variation>
    <location>
        <position position="207"/>
    </location>
</feature>
<feature type="sequence conflict" description="In Ref. 1; AAB49652." evidence="40" ref="1">
    <original>T</original>
    <variation>K</variation>
    <location>
        <position position="229"/>
    </location>
</feature>
<feature type="sequence conflict" description="In Ref. 1; AAB49652." evidence="40" ref="1">
    <original>T</original>
    <variation>R</variation>
    <location>
        <position position="354"/>
    </location>
</feature>
<feature type="helix" evidence="42">
    <location>
        <begin position="44"/>
        <end position="49"/>
    </location>
</feature>
<feature type="turn" evidence="42">
    <location>
        <begin position="50"/>
        <end position="52"/>
    </location>
</feature>
<feature type="strand" evidence="42">
    <location>
        <begin position="60"/>
        <end position="70"/>
    </location>
</feature>
<feature type="strand" evidence="42">
    <location>
        <begin position="76"/>
        <end position="83"/>
    </location>
</feature>
<feature type="strand" evidence="42">
    <location>
        <begin position="86"/>
        <end position="90"/>
    </location>
</feature>
<feature type="helix" evidence="42">
    <location>
        <begin position="92"/>
        <end position="96"/>
    </location>
</feature>
<feature type="turn" evidence="42">
    <location>
        <begin position="97"/>
        <end position="99"/>
    </location>
</feature>
<feature type="strand" evidence="42">
    <location>
        <begin position="101"/>
        <end position="105"/>
    </location>
</feature>
<feature type="strand" evidence="42">
    <location>
        <begin position="109"/>
        <end position="120"/>
    </location>
</feature>
<feature type="strand" evidence="42">
    <location>
        <begin position="122"/>
        <end position="124"/>
    </location>
</feature>
<feature type="strand" evidence="42">
    <location>
        <begin position="126"/>
        <end position="134"/>
    </location>
</feature>
<feature type="turn" evidence="42">
    <location>
        <begin position="135"/>
        <end position="138"/>
    </location>
</feature>
<feature type="strand" evidence="42">
    <location>
        <begin position="148"/>
        <end position="150"/>
    </location>
</feature>
<feature type="strand" evidence="42">
    <location>
        <begin position="153"/>
        <end position="155"/>
    </location>
</feature>
<feature type="strand" evidence="43">
    <location>
        <begin position="157"/>
        <end position="160"/>
    </location>
</feature>
<feature type="strand" evidence="42">
    <location>
        <begin position="162"/>
        <end position="166"/>
    </location>
</feature>
<feature type="strand" evidence="42">
    <location>
        <begin position="169"/>
        <end position="175"/>
    </location>
</feature>
<feature type="turn" evidence="42">
    <location>
        <begin position="189"/>
        <end position="191"/>
    </location>
</feature>
<feature type="strand" evidence="42">
    <location>
        <begin position="192"/>
        <end position="196"/>
    </location>
</feature>
<feature type="helix" evidence="42">
    <location>
        <begin position="199"/>
        <end position="204"/>
    </location>
</feature>
<feature type="strand" evidence="42">
    <location>
        <begin position="212"/>
        <end position="214"/>
    </location>
</feature>
<feature type="strand" evidence="42">
    <location>
        <begin position="218"/>
        <end position="227"/>
    </location>
</feature>
<feature type="strand" evidence="42">
    <location>
        <begin position="233"/>
        <end position="238"/>
    </location>
</feature>
<feature type="strand" evidence="42">
    <location>
        <begin position="241"/>
        <end position="244"/>
    </location>
</feature>
<feature type="strand" evidence="42">
    <location>
        <begin position="246"/>
        <end position="251"/>
    </location>
</feature>
<feature type="strand" evidence="42">
    <location>
        <begin position="261"/>
        <end position="270"/>
    </location>
</feature>
<feature type="helix" evidence="42">
    <location>
        <begin position="272"/>
        <end position="275"/>
    </location>
</feature>
<feature type="helix" evidence="42">
    <location>
        <begin position="284"/>
        <end position="287"/>
    </location>
</feature>
<feature type="strand" evidence="42">
    <location>
        <begin position="291"/>
        <end position="312"/>
    </location>
</feature>
<feature type="strand" evidence="42">
    <location>
        <begin position="315"/>
        <end position="323"/>
    </location>
</feature>
<feature type="strand" evidence="42">
    <location>
        <begin position="325"/>
        <end position="331"/>
    </location>
</feature>
<feature type="helix" evidence="42">
    <location>
        <begin position="334"/>
        <end position="336"/>
    </location>
</feature>
<feature type="strand" evidence="42">
    <location>
        <begin position="337"/>
        <end position="341"/>
    </location>
</feature>
<feature type="strand" evidence="42">
    <location>
        <begin position="343"/>
        <end position="345"/>
    </location>
</feature>
<feature type="strand" evidence="42">
    <location>
        <begin position="347"/>
        <end position="351"/>
    </location>
</feature>
<feature type="strand" evidence="42">
    <location>
        <begin position="364"/>
        <end position="369"/>
    </location>
</feature>
<feature type="strand" evidence="42">
    <location>
        <begin position="375"/>
        <end position="382"/>
    </location>
</feature>
<feature type="strand" evidence="42">
    <location>
        <begin position="393"/>
        <end position="395"/>
    </location>
</feature>
<feature type="strand" evidence="42">
    <location>
        <begin position="397"/>
        <end position="403"/>
    </location>
</feature>
<feature type="strand" evidence="42">
    <location>
        <begin position="405"/>
        <end position="413"/>
    </location>
</feature>
<feature type="helix" evidence="42">
    <location>
        <begin position="415"/>
        <end position="417"/>
    </location>
</feature>
<feature type="strand" evidence="42">
    <location>
        <begin position="422"/>
        <end position="428"/>
    </location>
</feature>
<feature type="strand" evidence="42">
    <location>
        <begin position="430"/>
        <end position="433"/>
    </location>
</feature>
<feature type="strand" evidence="42">
    <location>
        <begin position="436"/>
        <end position="440"/>
    </location>
</feature>
<feature type="turn" evidence="42">
    <location>
        <begin position="441"/>
        <end position="447"/>
    </location>
</feature>
<feature type="strand" evidence="42">
    <location>
        <begin position="450"/>
        <end position="455"/>
    </location>
</feature>
<feature type="helix" evidence="42">
    <location>
        <begin position="457"/>
        <end position="459"/>
    </location>
</feature>
<feature type="strand" evidence="42">
    <location>
        <begin position="460"/>
        <end position="466"/>
    </location>
</feature>
<feature type="strand" evidence="42">
    <location>
        <begin position="469"/>
        <end position="471"/>
    </location>
</feature>
<feature type="strand" evidence="42">
    <location>
        <begin position="473"/>
        <end position="477"/>
    </location>
</feature>
<feature type="strand" evidence="42">
    <location>
        <begin position="479"/>
        <end position="481"/>
    </location>
</feature>
<feature type="strand" evidence="42">
    <location>
        <begin position="484"/>
        <end position="489"/>
    </location>
</feature>
<feature type="helix" evidence="42">
    <location>
        <begin position="492"/>
        <end position="497"/>
    </location>
</feature>
<feature type="helix" evidence="43">
    <location>
        <begin position="498"/>
        <end position="500"/>
    </location>
</feature>
<feature type="strand" evidence="42">
    <location>
        <begin position="505"/>
        <end position="513"/>
    </location>
</feature>
<feature type="strand" evidence="42">
    <location>
        <begin position="516"/>
        <end position="524"/>
    </location>
</feature>
<feature type="strand" evidence="42">
    <location>
        <begin position="530"/>
        <end position="532"/>
    </location>
</feature>
<feature type="strand" evidence="42">
    <location>
        <begin position="534"/>
        <end position="540"/>
    </location>
</feature>
<feature type="helix" evidence="42">
    <location>
        <begin position="557"/>
        <end position="563"/>
    </location>
</feature>
<feature type="strand" evidence="42">
    <location>
        <begin position="568"/>
        <end position="573"/>
    </location>
</feature>
<feature type="strand" evidence="42">
    <location>
        <begin position="577"/>
        <end position="580"/>
    </location>
</feature>
<feature type="helix" evidence="42">
    <location>
        <begin position="582"/>
        <end position="585"/>
    </location>
</feature>
<feature type="helix" evidence="42">
    <location>
        <begin position="586"/>
        <end position="588"/>
    </location>
</feature>
<feature type="helix" evidence="42">
    <location>
        <begin position="594"/>
        <end position="608"/>
    </location>
</feature>
<feature type="turn" evidence="43">
    <location>
        <begin position="609"/>
        <end position="612"/>
    </location>
</feature>
<feature type="strand" evidence="42">
    <location>
        <begin position="613"/>
        <end position="623"/>
    </location>
</feature>
<feature type="helix" evidence="42">
    <location>
        <begin position="625"/>
        <end position="634"/>
    </location>
</feature>
<feature type="strand" evidence="42">
    <location>
        <begin position="637"/>
        <end position="639"/>
    </location>
</feature>
<feature type="strand" evidence="42">
    <location>
        <begin position="642"/>
        <end position="648"/>
    </location>
</feature>
<feature type="turn" evidence="42">
    <location>
        <begin position="653"/>
        <end position="655"/>
    </location>
</feature>
<feature type="helix" evidence="42">
    <location>
        <begin position="658"/>
        <end position="665"/>
    </location>
</feature>
<feature type="turn" evidence="42">
    <location>
        <begin position="670"/>
        <end position="673"/>
    </location>
</feature>
<feature type="helix" evidence="42">
    <location>
        <begin position="674"/>
        <end position="679"/>
    </location>
</feature>
<feature type="helix" evidence="42">
    <location>
        <begin position="683"/>
        <end position="689"/>
    </location>
</feature>
<feature type="strand" evidence="42">
    <location>
        <begin position="692"/>
        <end position="699"/>
    </location>
</feature>
<feature type="strand" evidence="42">
    <location>
        <begin position="703"/>
        <end position="705"/>
    </location>
</feature>
<feature type="helix" evidence="42">
    <location>
        <begin position="708"/>
        <end position="719"/>
    </location>
</feature>
<feature type="strand" evidence="42">
    <location>
        <begin position="725"/>
        <end position="729"/>
    </location>
</feature>
<feature type="helix" evidence="42">
    <location>
        <begin position="739"/>
        <end position="756"/>
    </location>
</feature>
<keyword id="KW-0002">3D-structure</keyword>
<keyword id="KW-0025">Alternative splicing</keyword>
<keyword id="KW-0037">Angiogenesis</keyword>
<keyword id="KW-0053">Apoptosis</keyword>
<keyword id="KW-0130">Cell adhesion</keyword>
<keyword id="KW-0965">Cell junction</keyword>
<keyword id="KW-1003">Cell membrane</keyword>
<keyword id="KW-0966">Cell projection</keyword>
<keyword id="KW-0165">Cleavage on pair of basic residues</keyword>
<keyword id="KW-0963">Cytoplasm</keyword>
<keyword id="KW-0903">Direct protein sequencing</keyword>
<keyword id="KW-1015">Disulfide bond</keyword>
<keyword id="KW-0325">Glycoprotein</keyword>
<keyword id="KW-0378">Hydrolase</keyword>
<keyword id="KW-0472">Membrane</keyword>
<keyword id="KW-0645">Protease</keyword>
<keyword id="KW-1267">Proteomics identification</keyword>
<keyword id="KW-1185">Reference proteome</keyword>
<keyword id="KW-0964">Secreted</keyword>
<keyword id="KW-0720">Serine protease</keyword>
<keyword id="KW-0735">Signal-anchor</keyword>
<keyword id="KW-0812">Transmembrane</keyword>
<keyword id="KW-1133">Transmembrane helix</keyword>
<comment type="function">
    <text evidence="1 5 6 7 9 10 12 13 15 16 17 18 19 20 21 22 23 24 25 26 29 30">Cell surface glycoprotein serine protease that participates in extracellular matrix degradation and involved in many cellular processes including tissue remodeling, fibrosis, wound healing, inflammation and tumor growth. Both plasma membrane and soluble forms exhibit post-proline cleaving endopeptidase activity, with a marked preference for Ala/Ser-Gly-Pro-Ser/Asn/Ala consensus sequences, on substrate such as alpha-2-antiplasmin SERPINF2 and SPRY2 (PubMed:14751930, PubMed:16223769, PubMed:16410248, PubMed:16480718, PubMed:17381073, PubMed:18095711, PubMed:21288888, PubMed:24371721). Degrade also gelatin, heat-denatured type I collagen, but not native collagen type I and IV, vitronectin, tenascin, laminin, fibronectin, fibrin or casein (PubMed:10347120, PubMed:10455171, PubMed:12376466, PubMed:16223769, PubMed:16651416, PubMed:18095711, PubMed:2172980, PubMed:7923219, PubMed:9065413). Also has dipeptidyl peptidase activity, exhibiting the ability to hydrolyze the prolyl bond two residues from the N-terminus of synthetic dipeptide substrates provided that the penultimate residue is proline, with a preference for Ala-Pro, Ile-Pro, Gly-Pro, Arg-Pro and Pro-Pro (PubMed:10347120, PubMed:10593948, PubMed:16175601, PubMed:16223769, PubMed:16410248, PubMed:16651416, PubMed:17381073, PubMed:21314817, PubMed:24371721, PubMed:24717288). Natural neuropeptide hormones for dipeptidyl peptidase are the neuropeptide Y (NPY), peptide YY (PYY), substance P (TAC1) and brain natriuretic peptide 32 (NPPB) (PubMed:21314817). The plasma membrane form, in association with either DPP4, PLAUR or integrins, is involved in the pericellular proteolysis of the extracellular matrix (ECM), and hence promotes cell adhesion, migration and invasion through the ECM. Plays a role in tissue remodeling during development and wound healing. Participates in the cell invasiveness towards the ECM in malignant melanoma cancers. Enhances tumor growth progression by increasing angiogenesis, collagen fiber degradation and apoptosis and by reducing antitumor response of the immune system. Promotes glioma cell invasion through the brain parenchyma by degrading the proteoglycan brevican. Acts as a tumor suppressor in melanocytic cells through regulation of cell proliferation and survival in a serine protease activity-independent manner.</text>
</comment>
<comment type="catalytic activity">
    <reaction evidence="10 13 15 19 20 22 25">
        <text>Hydrolysis of Pro-|-Xaa &gt;&gt; Ala-|-Xaa in oligopeptides.</text>
        <dbReference type="EC" id="3.4.21.26"/>
    </reaction>
</comment>
<comment type="catalytic activity">
    <reaction evidence="4 5 7 12 13 15 17 19 23 25 26">
        <text>Release of an N-terminal dipeptide, Xaa-Yaa-|-Zaa-, from a polypeptide, preferentially when Yaa is Pro, provided Zaa is neither Pro nor hydroxyproline.</text>
        <dbReference type="EC" id="3.4.14.5"/>
    </reaction>
</comment>
<comment type="activity regulation">
    <text evidence="7 15 16 19 24 30">Gelatinase activity is inhibited by serine-protease inhibitors, such as phenylmethylsulfonyl fluoride (PMSF), 4-(2-aminoethyl)-benzenesulfonyl fluoride hydrochloride (AEBSF), 4-amidino phenylsulfonyl fluoride (APSF) and diisopropyl fluorophosphate (DFP), N-ethylmaleimide (NEM) and phenylmethylsulfonyl fluoride (PMSF). Dipeptidyl peptidase activity is inhibited by 2,2'-azino-bis(3-ethylbenzthiazoline-6-sulfonic acid), diisopropylfluorophosphate (DFP). Prolyl endopeptidase activity is inhibited by the boronic acid peptide Ac-Gly-BoroPro, Ac-Gly-Pro-chloromethyl ketone and Thr-Ser-Gly-chloromethyl ketone.</text>
</comment>
<comment type="biophysicochemical properties">
    <kinetics>
        <KM evidence="7">0.46 mM for Ala-Pro (Dipeptidyl peptidase activity)</KM>
        <KM evidence="7">0.9 mM for Lys-Pro (Dipeptidyl peptidase activity)</KM>
        <KM evidence="7">1.15 mM for Gly-Pro (Dipeptidyl peptidase activity)</KM>
        <KM evidence="19">0.25 mM for Gly-Pro (Dipeptidyl peptidase activity)</KM>
        <KM evidence="15">0.24 mM for Ala-Pro (Dipeptidyl peptidase activity)</KM>
        <KM evidence="15">0.1 mM for Ile-Pro (Dipeptidyl peptidase activity)</KM>
        <KM evidence="15">0.24 mM for Phe-Pro (Dipeptidyl peptidase activity)</KM>
        <KM evidence="15">0.24 mM for Gly-Pro (Dipeptidyl peptidase activity)</KM>
        <KM evidence="15 19">0.33 mM for Ac-Gly-Pro (Prolyl endopeptidase activity)</KM>
        <KM evidence="16">1.3 uM for Thr-Ser-Gly-Pro-Asn-Gln (Prolyl endopeptidase activity)</KM>
        <KM evidence="16">2.2 uM for Ala-Ser-Gly-Pro-Asn-Gln (Prolyl endopeptidase activity)</KM>
        <KM evidence="16">0.7 uM for Thr-Ala-Gly-Pro-Asn-Gln (Prolyl endopeptidase activity)</KM>
        <KM evidence="16">1.9 uM for Thr-Ser-Gly-Pro-Ser-Gln (Prolyl endopeptidase activity)</KM>
        <KM evidence="16">2.2 uM for Thr-Ser-Gly-Pro-Asn-Ser (Prolyl endopeptidase activity)</KM>
        <KM evidence="16">4.3 uM for Ala-Ser-Gly-Pro-Ser-Ser (Prolyl endopeptidase activity)</KM>
        <KM evidence="13">0.101 mM for Gly-Pro (FAP form, prolyl endopeptidase activity)</KM>
        <KM evidence="13">0.124 mM for Gly-Pro (Antiplasmin-cleaving enzyme FAP soluble form, prolyl endopeptidase activity)</KM>
        <KM evidence="13">0.323 mM for Gly-Pro (FAP form, dipeptidyl peptidase activity)</KM>
        <KM evidence="13">0.272 mM for Gly-Pro (Antiplasmin-cleaving enzyme FAP soluble form, dipeptidyl peptidase activity)</KM>
        <KM evidence="13">0.029 mM for Arg-Gly-Thr-Ser-Gly-Pro-Asn-Gln-Glu-Gln-Glu (FAP form, prolyl endopeptidase activity)</KM>
        <KM evidence="13">0.026 mM for Arg-Gly-Thr-Ser-Gly-Pro-Asn-Gln-Glu-Gln-Glu (Antiplasmin-cleaving enzyme FAP soluble form, prolyl endopeptidase activity)</KM>
    </kinetics>
    <phDependence>
        <text evidence="24 30">Optimum pH is 6-8.4 for gelatinase activity. At pH lower than 5 inhibited gelatinase activity.</text>
    </phDependence>
    <temperatureDependence>
        <text evidence="24 30">Optimum temperature is 37 degrees Celsius for gelatinase activity. Temperatures above 50 degrees Celsius inhibit gelatinase activity.</text>
    </temperatureDependence>
</comment>
<comment type="subunit">
    <text evidence="6 9 11 13 15 17 30">Homodimer; homodimerization is required for activity of both plasma membrane and soluble forms. The monomer is inactive. Heterodimer with DPP4. Interacts with PLAUR; the interaction occurs at the cell surface of invadopodia membranes. Interacts with ITGB1. Interacts with ITGA3. Associates with integrin alpha-3/beta-1; the association occurs in a collagen-dependent manner at the cell surface of invadopodia membranes.</text>
</comment>
<comment type="interaction">
    <interactant intactId="EBI-4319803">
        <id>Q12884</id>
    </interactant>
    <interactant intactId="EBI-7629173">
        <id>P01275</id>
        <label>GCG</label>
    </interactant>
    <organismsDiffer>false</organismsDiffer>
    <experiments>4</experiments>
</comment>
<comment type="interaction">
    <interactant intactId="EBI-4319803">
        <id>Q12884</id>
    </interactant>
    <interactant intactId="EBI-751454">
        <id>P01282</id>
        <label>VIP</label>
    </interactant>
    <organismsDiffer>false</organismsDiffer>
    <experiments>2</experiments>
</comment>
<comment type="subcellular location">
    <molecule>Prolyl endopeptidase FAP</molecule>
    <subcellularLocation>
        <location evidence="7 12 18 26 28">Cell surface</location>
    </subcellularLocation>
    <subcellularLocation>
        <location evidence="9 17 30 31">Cell membrane</location>
        <topology evidence="2">Single-pass type II membrane protein</topology>
    </subcellularLocation>
    <subcellularLocation>
        <location evidence="17 30">Cell projection</location>
        <location evidence="17 30">Lamellipodium membrane</location>
        <topology evidence="2">Single-pass type II membrane protein</topology>
    </subcellularLocation>
    <subcellularLocation>
        <location evidence="9 17 29 30 31">Cell projection</location>
        <location evidence="9 17 29 30 31">Invadopodium membrane</location>
        <topology evidence="2">Single-pass type II membrane protein</topology>
    </subcellularLocation>
    <subcellularLocation>
        <location evidence="31">Cell projection</location>
        <location evidence="31">Ruffle membrane</location>
        <topology evidence="2">Single-pass type II membrane protein</topology>
    </subcellularLocation>
    <subcellularLocation>
        <location evidence="24">Membrane</location>
        <topology evidence="2">Single-pass type II membrane protein</topology>
    </subcellularLocation>
    <text evidence="7 9 12 17 18 24 26 28 29 30 31">Localized on cell surface with lamellipodia and invadopodia membranes and on shed vesicles. Colocalized with DPP4 at invadopodia and lamellipodia membranes of migratory activated endothelial cells in collagenous matrix. Colocalized with DPP4 on endothelial cells of capillary-like microvessels but not large vessels within invasive breast ductal carcinoma. Anchored and enriched preferentially by integrin alpha-3/beta-1 at invadopodia, plasma membrane protrusions that correspond to sites of cell invasion, in a collagen-dependent manner. Localized at plasma and ruffle membranes in a collagen-independent manner. Colocalized with PLAUR preferentially at the cell surface of invadopodia membranes in a cytoskeleton-, integrin- and vitronectin-dependent manner. Concentrated at invadopodia membranes, specialized protrusions of the ventral plasma membrane in a fibrobectin-dependent manner. Colocalizes with extracellular components (ECM), such as collagen fibers and fibronectin.</text>
</comment>
<comment type="subcellular location">
    <molecule>Antiplasmin-cleaving enzyme FAP, soluble form</molecule>
    <subcellularLocation>
        <location evidence="10 13 25">Secreted</location>
    </subcellularLocation>
    <text evidence="10 13 25">Found in blood plasma and serum.</text>
</comment>
<comment type="subcellular location">
    <molecule>Isoform 2</molecule>
    <subcellularLocation>
        <location evidence="32">Cytoplasm</location>
    </subcellularLocation>
</comment>
<comment type="alternative products">
    <event type="alternative splicing"/>
    <isoform>
        <id>Q12884-1</id>
        <name>1</name>
        <name>L</name>
        <name evidence="32">seprase-I</name>
        <sequence type="displayed"/>
    </isoform>
    <isoform>
        <id>Q12884-2</id>
        <name evidence="8">2</name>
        <name>S</name>
        <name>Truncated</name>
        <name evidence="32">seprase-s</name>
        <sequence type="described" ref="VSP_005367"/>
    </isoform>
</comment>
<comment type="tissue specificity">
    <text evidence="5 7 8 12 18 21 25 28">Expressed in adipose tissue. Expressed in the dermal fibroblasts in the fetal skin. Expressed in the granulation tissue of healing wounds and on reactive stromal fibroblast in epithelial cancers. Expressed in activated fibroblast-like synoviocytes from inflamed synovial tissues. Expressed in activated hepatic stellate cells (HSC) and myofibroblasts from cirrhotic liver, but not detected in normal liver. Expressed in glioma cells (at protein level). Expressed in glioblastomas and glioma cells. Isoform 1 and isoform 2 are expressed in melanoma, carcinoma and fibroblast cell lines.</text>
</comment>
<comment type="induction">
    <text evidence="21 27">In fibroblasts at times and sites of tissue remodeling during development, tissue repair and carcinogenesis. Up-regulated upon tumor stem cell differentiation. Up-regulated by transforming growth factor-beta, 12-O-tetradecanoyl phorbol-13-acetate and retinoids.</text>
</comment>
<comment type="PTM">
    <text evidence="11 14 28 30">N-glycosylated.</text>
</comment>
<comment type="PTM">
    <text>The N-terminus may be blocked.</text>
</comment>
<comment type="miscellaneous">
    <molecule>Isoform 1</molecule>
    <text>Major isoform.</text>
</comment>
<comment type="miscellaneous">
    <molecule>Isoform 2</molecule>
    <text evidence="8">Upstream open reading frames ORF(s)-containing region inhibits the translation of its downstream ORF.</text>
</comment>
<comment type="similarity">
    <text evidence="40">Belongs to the peptidase S9B family.</text>
</comment>
<proteinExistence type="evidence at protein level"/>
<dbReference type="EC" id="3.4.21.26" evidence="13 10"/>
<dbReference type="EC" id="3.4.14.5" evidence="5 10 13"/>
<dbReference type="EC" id="3.4.21.-" evidence="30 10 13"/>
<dbReference type="EMBL" id="U09278">
    <property type="protein sequence ID" value="AAB49652.1"/>
    <property type="molecule type" value="mRNA"/>
</dbReference>
<dbReference type="EMBL" id="U76833">
    <property type="protein sequence ID" value="AAC51668.1"/>
    <property type="molecule type" value="mRNA"/>
</dbReference>
<dbReference type="EMBL" id="AF007822">
    <property type="protein sequence ID" value="AAF21600.1"/>
    <property type="molecule type" value="mRNA"/>
</dbReference>
<dbReference type="EMBL" id="AC007750">
    <property type="protein sequence ID" value="AAY24205.1"/>
    <property type="molecule type" value="Genomic_DNA"/>
</dbReference>
<dbReference type="EMBL" id="CH471058">
    <property type="protein sequence ID" value="EAX11353.1"/>
    <property type="molecule type" value="Genomic_DNA"/>
</dbReference>
<dbReference type="EMBL" id="BC026250">
    <property type="protein sequence ID" value="AAH26250.1"/>
    <property type="molecule type" value="mRNA"/>
</dbReference>
<dbReference type="CCDS" id="CCDS33311.1">
    <molecule id="Q12884-1"/>
</dbReference>
<dbReference type="RefSeq" id="NP_001278736.1">
    <property type="nucleotide sequence ID" value="NM_001291807.2"/>
</dbReference>
<dbReference type="RefSeq" id="NP_004451.2">
    <molecule id="Q12884-1"/>
    <property type="nucleotide sequence ID" value="NM_004460.4"/>
</dbReference>
<dbReference type="PDB" id="1Z68">
    <property type="method" value="X-ray"/>
    <property type="resolution" value="2.60 A"/>
    <property type="chains" value="A/B=39-757"/>
</dbReference>
<dbReference type="PDB" id="6Y0F">
    <property type="method" value="X-ray"/>
    <property type="resolution" value="2.92 A"/>
    <property type="chains" value="A/B/C/D=36-757"/>
</dbReference>
<dbReference type="PDB" id="9DVQ">
    <property type="method" value="EM"/>
    <property type="resolution" value="2.70 A"/>
    <property type="chains" value="A/B=27-760"/>
</dbReference>
<dbReference type="PDB" id="9DVR">
    <property type="method" value="EM"/>
    <property type="resolution" value="2.70 A"/>
    <property type="chains" value="A/B=27-760"/>
</dbReference>
<dbReference type="PDBsum" id="1Z68"/>
<dbReference type="PDBsum" id="6Y0F"/>
<dbReference type="PDBsum" id="9DVQ"/>
<dbReference type="PDBsum" id="9DVR"/>
<dbReference type="EMDB" id="EMD-47215"/>
<dbReference type="EMDB" id="EMD-47216"/>
<dbReference type="SMR" id="Q12884"/>
<dbReference type="BioGRID" id="108485">
    <property type="interactions" value="21"/>
</dbReference>
<dbReference type="CORUM" id="Q12884"/>
<dbReference type="FunCoup" id="Q12884">
    <property type="interactions" value="68"/>
</dbReference>
<dbReference type="IntAct" id="Q12884">
    <property type="interactions" value="10"/>
</dbReference>
<dbReference type="MINT" id="Q12884"/>
<dbReference type="STRING" id="9606.ENSP00000188790"/>
<dbReference type="BindingDB" id="Q12884"/>
<dbReference type="ChEMBL" id="CHEMBL4683"/>
<dbReference type="DrugBank" id="DB06474">
    <property type="generic name" value="Sibrotuzumab"/>
</dbReference>
<dbReference type="DrugBank" id="DB06182">
    <property type="generic name" value="Talabostat"/>
</dbReference>
<dbReference type="DrugCentral" id="Q12884"/>
<dbReference type="GuidetoPHARMACOLOGY" id="2365"/>
<dbReference type="ESTHER" id="human-FAP">
    <property type="family name" value="DPP4N_Peptidase_S9"/>
</dbReference>
<dbReference type="MEROPS" id="S09.007"/>
<dbReference type="TCDB" id="8.A.51.1.6">
    <property type="family name" value="the dipeptidyl-aminopeptidase-like protein 6 beta subunit of kv4 channels (dpp6) family"/>
</dbReference>
<dbReference type="GlyConnect" id="1641">
    <property type="glycosylation" value="12 N-Linked glycans (3 sites)"/>
</dbReference>
<dbReference type="GlyCosmos" id="Q12884">
    <property type="glycosylation" value="6 sites, 12 glycans"/>
</dbReference>
<dbReference type="GlyGen" id="Q12884">
    <property type="glycosylation" value="7 sites, 26 N-linked glycans (4 sites), 1 O-linked glycan (1 site)"/>
</dbReference>
<dbReference type="iPTMnet" id="Q12884"/>
<dbReference type="PhosphoSitePlus" id="Q12884"/>
<dbReference type="SwissPalm" id="Q12884"/>
<dbReference type="BioMuta" id="FAP"/>
<dbReference type="DMDM" id="292495099"/>
<dbReference type="jPOST" id="Q12884"/>
<dbReference type="MassIVE" id="Q12884"/>
<dbReference type="PaxDb" id="9606-ENSP00000188790"/>
<dbReference type="PeptideAtlas" id="Q12884"/>
<dbReference type="ProteomicsDB" id="59000">
    <molecule id="Q12884-1"/>
</dbReference>
<dbReference type="ProteomicsDB" id="59001">
    <molecule id="Q12884-2"/>
</dbReference>
<dbReference type="ABCD" id="Q12884">
    <property type="antibodies" value="72 sequenced antibodies"/>
</dbReference>
<dbReference type="Antibodypedia" id="33750">
    <property type="antibodies" value="701 antibodies from 45 providers"/>
</dbReference>
<dbReference type="DNASU" id="2191"/>
<dbReference type="Ensembl" id="ENST00000188790.9">
    <molecule id="Q12884-1"/>
    <property type="protein sequence ID" value="ENSP00000188790.4"/>
    <property type="gene ID" value="ENSG00000078098.15"/>
</dbReference>
<dbReference type="GeneID" id="2191"/>
<dbReference type="KEGG" id="hsa:2191"/>
<dbReference type="MANE-Select" id="ENST00000188790.9">
    <property type="protein sequence ID" value="ENSP00000188790.4"/>
    <property type="RefSeq nucleotide sequence ID" value="NM_004460.5"/>
    <property type="RefSeq protein sequence ID" value="NP_004451.2"/>
</dbReference>
<dbReference type="UCSC" id="uc002ucd.3">
    <molecule id="Q12884-1"/>
    <property type="organism name" value="human"/>
</dbReference>
<dbReference type="AGR" id="HGNC:3590"/>
<dbReference type="CTD" id="2191"/>
<dbReference type="DisGeNET" id="2191"/>
<dbReference type="GeneCards" id="FAP"/>
<dbReference type="HGNC" id="HGNC:3590">
    <property type="gene designation" value="FAP"/>
</dbReference>
<dbReference type="HPA" id="ENSG00000078098">
    <property type="expression patterns" value="Tissue enhanced (endometrium, smooth muscle)"/>
</dbReference>
<dbReference type="MalaCards" id="FAP"/>
<dbReference type="MIM" id="600403">
    <property type="type" value="gene"/>
</dbReference>
<dbReference type="neXtProt" id="NX_Q12884"/>
<dbReference type="OpenTargets" id="ENSG00000078098"/>
<dbReference type="PharmGKB" id="PA28003"/>
<dbReference type="VEuPathDB" id="HostDB:ENSG00000078098"/>
<dbReference type="eggNOG" id="KOG2100">
    <property type="taxonomic scope" value="Eukaryota"/>
</dbReference>
<dbReference type="GeneTree" id="ENSGT00940000160454"/>
<dbReference type="InParanoid" id="Q12884"/>
<dbReference type="OMA" id="MRTPQEN"/>
<dbReference type="OrthoDB" id="16520at2759"/>
<dbReference type="PAN-GO" id="Q12884">
    <property type="GO annotations" value="3 GO annotations based on evolutionary models"/>
</dbReference>
<dbReference type="PhylomeDB" id="Q12884"/>
<dbReference type="TreeFam" id="TF313309"/>
<dbReference type="BRENDA" id="3.4.21.B28">
    <property type="organism ID" value="2681"/>
</dbReference>
<dbReference type="PathwayCommons" id="Q12884"/>
<dbReference type="SABIO-RK" id="Q12884"/>
<dbReference type="SignaLink" id="Q12884"/>
<dbReference type="SIGNOR" id="Q12884"/>
<dbReference type="BioGRID-ORCS" id="2191">
    <property type="hits" value="10 hits in 1144 CRISPR screens"/>
</dbReference>
<dbReference type="ChiTaRS" id="FAP">
    <property type="organism name" value="human"/>
</dbReference>
<dbReference type="EvolutionaryTrace" id="Q12884"/>
<dbReference type="GeneWiki" id="Fibroblast_activation_protein,_alpha"/>
<dbReference type="GenomeRNAi" id="2191"/>
<dbReference type="Pharos" id="Q12884">
    <property type="development level" value="Tchem"/>
</dbReference>
<dbReference type="PRO" id="PR:Q12884"/>
<dbReference type="Proteomes" id="UP000005640">
    <property type="component" value="Chromosome 2"/>
</dbReference>
<dbReference type="RNAct" id="Q12884">
    <property type="molecule type" value="protein"/>
</dbReference>
<dbReference type="Bgee" id="ENSG00000078098">
    <property type="expression patterns" value="Expressed in stromal cell of endometrium and 123 other cell types or tissues"/>
</dbReference>
<dbReference type="ExpressionAtlas" id="Q12884">
    <property type="expression patterns" value="baseline and differential"/>
</dbReference>
<dbReference type="GO" id="GO:0045177">
    <property type="term" value="C:apical part of cell"/>
    <property type="evidence" value="ECO:0007669"/>
    <property type="project" value="Ensembl"/>
</dbReference>
<dbReference type="GO" id="GO:0045178">
    <property type="term" value="C:basal part of cell"/>
    <property type="evidence" value="ECO:0007669"/>
    <property type="project" value="Ensembl"/>
</dbReference>
<dbReference type="GO" id="GO:0009986">
    <property type="term" value="C:cell surface"/>
    <property type="evidence" value="ECO:0000250"/>
    <property type="project" value="UniProtKB"/>
</dbReference>
<dbReference type="GO" id="GO:0005737">
    <property type="term" value="C:cytoplasm"/>
    <property type="evidence" value="ECO:0007669"/>
    <property type="project" value="UniProtKB-SubCell"/>
</dbReference>
<dbReference type="GO" id="GO:0005615">
    <property type="term" value="C:extracellular space"/>
    <property type="evidence" value="ECO:0000314"/>
    <property type="project" value="BHF-UCL"/>
</dbReference>
<dbReference type="GO" id="GO:0005925">
    <property type="term" value="C:focal adhesion"/>
    <property type="evidence" value="ECO:0007005"/>
    <property type="project" value="UniProtKB"/>
</dbReference>
<dbReference type="GO" id="GO:0030027">
    <property type="term" value="C:lamellipodium"/>
    <property type="evidence" value="ECO:0000314"/>
    <property type="project" value="UniProtKB"/>
</dbReference>
<dbReference type="GO" id="GO:0031258">
    <property type="term" value="C:lamellipodium membrane"/>
    <property type="evidence" value="ECO:0007669"/>
    <property type="project" value="UniProtKB-SubCell"/>
</dbReference>
<dbReference type="GO" id="GO:0016020">
    <property type="term" value="C:membrane"/>
    <property type="evidence" value="ECO:0000303"/>
    <property type="project" value="UniProtKB"/>
</dbReference>
<dbReference type="GO" id="GO:1905368">
    <property type="term" value="C:peptidase complex"/>
    <property type="evidence" value="ECO:0000315"/>
    <property type="project" value="UniProtKB"/>
</dbReference>
<dbReference type="GO" id="GO:0005886">
    <property type="term" value="C:plasma membrane"/>
    <property type="evidence" value="ECO:0000314"/>
    <property type="project" value="UniProtKB"/>
</dbReference>
<dbReference type="GO" id="GO:0032587">
    <property type="term" value="C:ruffle membrane"/>
    <property type="evidence" value="ECO:0000303"/>
    <property type="project" value="UniProtKB"/>
</dbReference>
<dbReference type="GO" id="GO:0008239">
    <property type="term" value="F:dipeptidyl-peptidase activity"/>
    <property type="evidence" value="ECO:0000314"/>
    <property type="project" value="UniProtKB"/>
</dbReference>
<dbReference type="GO" id="GO:0004175">
    <property type="term" value="F:endopeptidase activity"/>
    <property type="evidence" value="ECO:0000314"/>
    <property type="project" value="BHF-UCL"/>
</dbReference>
<dbReference type="GO" id="GO:0042802">
    <property type="term" value="F:identical protein binding"/>
    <property type="evidence" value="ECO:0000353"/>
    <property type="project" value="UniProtKB"/>
</dbReference>
<dbReference type="GO" id="GO:0005178">
    <property type="term" value="F:integrin binding"/>
    <property type="evidence" value="ECO:0000353"/>
    <property type="project" value="UniProtKB"/>
</dbReference>
<dbReference type="GO" id="GO:0008233">
    <property type="term" value="F:peptidase activity"/>
    <property type="evidence" value="ECO:0000314"/>
    <property type="project" value="UniProtKB"/>
</dbReference>
<dbReference type="GO" id="GO:0002020">
    <property type="term" value="F:protease binding"/>
    <property type="evidence" value="ECO:0000353"/>
    <property type="project" value="BHF-UCL"/>
</dbReference>
<dbReference type="GO" id="GO:0042803">
    <property type="term" value="F:protein homodimerization activity"/>
    <property type="evidence" value="ECO:0000314"/>
    <property type="project" value="UniProtKB"/>
</dbReference>
<dbReference type="GO" id="GO:0004252">
    <property type="term" value="F:serine-type endopeptidase activity"/>
    <property type="evidence" value="ECO:0000314"/>
    <property type="project" value="UniProtKB"/>
</dbReference>
<dbReference type="GO" id="GO:0008236">
    <property type="term" value="F:serine-type peptidase activity"/>
    <property type="evidence" value="ECO:0000314"/>
    <property type="project" value="UniProtKB"/>
</dbReference>
<dbReference type="GO" id="GO:0001525">
    <property type="term" value="P:angiogenesis"/>
    <property type="evidence" value="ECO:0007669"/>
    <property type="project" value="UniProtKB-KW"/>
</dbReference>
<dbReference type="GO" id="GO:0007155">
    <property type="term" value="P:cell adhesion"/>
    <property type="evidence" value="ECO:0007669"/>
    <property type="project" value="UniProtKB-KW"/>
</dbReference>
<dbReference type="GO" id="GO:0043542">
    <property type="term" value="P:endothelial cell migration"/>
    <property type="evidence" value="ECO:0000314"/>
    <property type="project" value="UniProtKB"/>
</dbReference>
<dbReference type="GO" id="GO:1902362">
    <property type="term" value="P:melanocyte apoptotic process"/>
    <property type="evidence" value="ECO:0000250"/>
    <property type="project" value="UniProtKB"/>
</dbReference>
<dbReference type="GO" id="GO:0097325">
    <property type="term" value="P:melanocyte proliferation"/>
    <property type="evidence" value="ECO:0000250"/>
    <property type="project" value="UniProtKB"/>
</dbReference>
<dbReference type="GO" id="GO:0060244">
    <property type="term" value="P:negative regulation of cell proliferation involved in contact inhibition"/>
    <property type="evidence" value="ECO:0000250"/>
    <property type="project" value="UniProtKB"/>
</dbReference>
<dbReference type="GO" id="GO:0010716">
    <property type="term" value="P:negative regulation of extracellular matrix disassembly"/>
    <property type="evidence" value="ECO:0000314"/>
    <property type="project" value="UniProtKB"/>
</dbReference>
<dbReference type="GO" id="GO:1903054">
    <property type="term" value="P:negative regulation of extracellular matrix organization"/>
    <property type="evidence" value="ECO:0000314"/>
    <property type="project" value="UniProtKB"/>
</dbReference>
<dbReference type="GO" id="GO:1900119">
    <property type="term" value="P:positive regulation of execution phase of apoptosis"/>
    <property type="evidence" value="ECO:0000250"/>
    <property type="project" value="UniProtKB"/>
</dbReference>
<dbReference type="GO" id="GO:0006508">
    <property type="term" value="P:proteolysis"/>
    <property type="evidence" value="ECO:0000314"/>
    <property type="project" value="UniProtKB"/>
</dbReference>
<dbReference type="GO" id="GO:0051603">
    <property type="term" value="P:proteolysis involved in protein catabolic process"/>
    <property type="evidence" value="ECO:0000314"/>
    <property type="project" value="UniProtKB"/>
</dbReference>
<dbReference type="GO" id="GO:0051726">
    <property type="term" value="P:regulation of cell cycle"/>
    <property type="evidence" value="ECO:0000250"/>
    <property type="project" value="UniProtKB"/>
</dbReference>
<dbReference type="GO" id="GO:0010710">
    <property type="term" value="P:regulation of collagen catabolic process"/>
    <property type="evidence" value="ECO:0000314"/>
    <property type="project" value="UniProtKB"/>
</dbReference>
<dbReference type="GO" id="GO:0051917">
    <property type="term" value="P:regulation of fibrinolysis"/>
    <property type="evidence" value="ECO:0000305"/>
    <property type="project" value="BHF-UCL"/>
</dbReference>
<dbReference type="FunFam" id="2.140.10.30:FF:000001">
    <property type="entry name" value="Dipeptidyl peptidase 4"/>
    <property type="match status" value="1"/>
</dbReference>
<dbReference type="FunFam" id="3.40.50.1820:FF:000003">
    <property type="entry name" value="Dipeptidyl peptidase 4"/>
    <property type="match status" value="1"/>
</dbReference>
<dbReference type="Gene3D" id="3.40.50.1820">
    <property type="entry name" value="alpha/beta hydrolase"/>
    <property type="match status" value="1"/>
</dbReference>
<dbReference type="Gene3D" id="2.140.10.30">
    <property type="entry name" value="Dipeptidylpeptidase IV, N-terminal domain"/>
    <property type="match status" value="1"/>
</dbReference>
<dbReference type="InterPro" id="IPR029058">
    <property type="entry name" value="AB_hydrolase_fold"/>
</dbReference>
<dbReference type="InterPro" id="IPR002471">
    <property type="entry name" value="Pept_S9_AS"/>
</dbReference>
<dbReference type="InterPro" id="IPR001375">
    <property type="entry name" value="Peptidase_S9_cat"/>
</dbReference>
<dbReference type="InterPro" id="IPR002469">
    <property type="entry name" value="Peptidase_S9B_N"/>
</dbReference>
<dbReference type="InterPro" id="IPR050278">
    <property type="entry name" value="Serine_Prot_S9B/DPPIV"/>
</dbReference>
<dbReference type="PANTHER" id="PTHR11731:SF136">
    <property type="entry name" value="PROLYL ENDOPEPTIDASE FAP"/>
    <property type="match status" value="1"/>
</dbReference>
<dbReference type="PANTHER" id="PTHR11731">
    <property type="entry name" value="PROTEASE FAMILY S9B,C DIPEPTIDYL-PEPTIDASE IV-RELATED"/>
    <property type="match status" value="1"/>
</dbReference>
<dbReference type="Pfam" id="PF00930">
    <property type="entry name" value="DPPIV_N"/>
    <property type="match status" value="1"/>
</dbReference>
<dbReference type="Pfam" id="PF00326">
    <property type="entry name" value="Peptidase_S9"/>
    <property type="match status" value="1"/>
</dbReference>
<dbReference type="SUPFAM" id="SSF53474">
    <property type="entry name" value="alpha/beta-Hydrolases"/>
    <property type="match status" value="1"/>
</dbReference>
<dbReference type="SUPFAM" id="SSF82171">
    <property type="entry name" value="DPP6 N-terminal domain-like"/>
    <property type="match status" value="1"/>
</dbReference>
<sequence>MKTWVKIVFGVATSAVLALLVMCIVLRPSRVHNSEENTMRALTLKDILNGTFSYKTFFPNWISGQEYLHQSADNNIVLYNIETGQSYTILSNRTMKSVNASNYGLSPDRQFVYLESDYSKLWRYSYTATYYIYDLSNGEFVRGNELPRPIQYLCWSPVGSKLAYVYQNNIYLKQRPGDPPFQITFNGRENKIFNGIPDWVYEEEMLATKYALWWSPNGKFLAYAEFNDTDIPVIAYSYYGDEQYPRTINIPYPKAGAKNPVVRIFIIDTTYPAYVGPQEVPVPAMIASSDYYFSWLTWVTDERVCLQWLKRVQNVSVLSICDFREDWQTWDCPKTQEHIEESRTGWAGGFFVSTPVFSYDAISYYKIFSDKDGYKHIHYIKDTVENAIQITSGKWEAINIFRVTQDSLFYSSNEFEEYPGRRNIYRISIGSYPPSKKCVTCHLRKERCQYYTASFSDYAKYYALVCYGPGIPISTLHDGRTDQEIKILEENKELENALKNIQLPKEEIKKLEVDEITLWYKMILPPQFDRSKKYPLLIQVYGGPCSQSVRSVFAVNWISYLASKEGMVIALVDGRGTAFQGDKLLYAVYRKLGVYEVEDQITAVRKFIEMGFIDEKRIAIWGWSYGGYVSSLALASGTGLFKCGIAVAPVSSWEYYASVYTERFMGLPTKDDNLEHYKNSTVMARAEYFRNVDYLLIHGTADDNVHFQNSAQIAKALVNAQVDFQAMWYSDQNHGLSGLSTNHLYTHMTHFLKQCFSLSD</sequence>
<protein>
    <recommendedName>
        <fullName evidence="40">Prolyl endopeptidase FAP</fullName>
        <ecNumber evidence="13">3.4.21.26</ecNumber>
    </recommendedName>
    <alternativeName>
        <fullName evidence="35 38">170 kDa melanoma membrane-bound gelatinase</fullName>
    </alternativeName>
    <alternativeName>
        <fullName evidence="40">Dipeptidyl peptidase FAP</fullName>
        <ecNumber evidence="5">3.4.14.5</ecNumber>
    </alternativeName>
    <alternativeName>
        <fullName evidence="36">Fibroblast activation protein alpha</fullName>
        <shortName evidence="1">FAPalpha</shortName>
    </alternativeName>
    <alternativeName>
        <fullName evidence="40">Gelatine degradation protease FAP</fullName>
        <ecNumber evidence="30">3.4.21.-</ecNumber>
    </alternativeName>
    <alternativeName>
        <fullName evidence="39">Integral membrane serine protease</fullName>
    </alternativeName>
    <alternativeName>
        <fullName evidence="40">Post-proline cleaving enzyme</fullName>
    </alternativeName>
    <alternativeName>
        <fullName evidence="39">Serine integral membrane protease</fullName>
        <shortName evidence="39">SIMP</shortName>
    </alternativeName>
    <alternativeName>
        <fullName evidence="35">Surface-expressed protease</fullName>
        <shortName evidence="37">Seprase</shortName>
    </alternativeName>
    <component>
        <recommendedName>
            <fullName evidence="33">Antiplasmin-cleaving enzyme FAP, soluble form</fullName>
            <shortName evidence="33">APCE</shortName>
            <ecNumber evidence="10 13">3.4.14.5</ecNumber>
            <ecNumber evidence="10 13">3.4.21.-</ecNumber>
            <ecNumber evidence="10 13">3.4.21.26</ecNumber>
        </recommendedName>
    </component>
</protein>